<name>ENO_LEGPC</name>
<protein>
    <recommendedName>
        <fullName evidence="1">Enolase</fullName>
        <ecNumber evidence="1">4.2.1.11</ecNumber>
    </recommendedName>
    <alternativeName>
        <fullName evidence="1">2-phospho-D-glycerate hydro-lyase</fullName>
    </alternativeName>
    <alternativeName>
        <fullName evidence="1">2-phosphoglycerate dehydratase</fullName>
    </alternativeName>
</protein>
<accession>A5IDM2</accession>
<dbReference type="EC" id="4.2.1.11" evidence="1"/>
<dbReference type="EMBL" id="CP000675">
    <property type="protein sequence ID" value="ABQ55472.1"/>
    <property type="molecule type" value="Genomic_DNA"/>
</dbReference>
<dbReference type="RefSeq" id="WP_011946936.1">
    <property type="nucleotide sequence ID" value="NC_009494.2"/>
</dbReference>
<dbReference type="SMR" id="A5IDM2"/>
<dbReference type="KEGG" id="lpc:LPC_1523"/>
<dbReference type="HOGENOM" id="CLU_031223_2_1_6"/>
<dbReference type="UniPathway" id="UPA00109">
    <property type="reaction ID" value="UER00187"/>
</dbReference>
<dbReference type="GO" id="GO:0009986">
    <property type="term" value="C:cell surface"/>
    <property type="evidence" value="ECO:0007669"/>
    <property type="project" value="UniProtKB-SubCell"/>
</dbReference>
<dbReference type="GO" id="GO:0005576">
    <property type="term" value="C:extracellular region"/>
    <property type="evidence" value="ECO:0007669"/>
    <property type="project" value="UniProtKB-SubCell"/>
</dbReference>
<dbReference type="GO" id="GO:0000015">
    <property type="term" value="C:phosphopyruvate hydratase complex"/>
    <property type="evidence" value="ECO:0007669"/>
    <property type="project" value="InterPro"/>
</dbReference>
<dbReference type="GO" id="GO:0000287">
    <property type="term" value="F:magnesium ion binding"/>
    <property type="evidence" value="ECO:0007669"/>
    <property type="project" value="UniProtKB-UniRule"/>
</dbReference>
<dbReference type="GO" id="GO:0004634">
    <property type="term" value="F:phosphopyruvate hydratase activity"/>
    <property type="evidence" value="ECO:0007669"/>
    <property type="project" value="UniProtKB-UniRule"/>
</dbReference>
<dbReference type="GO" id="GO:0006096">
    <property type="term" value="P:glycolytic process"/>
    <property type="evidence" value="ECO:0007669"/>
    <property type="project" value="UniProtKB-UniRule"/>
</dbReference>
<dbReference type="CDD" id="cd03313">
    <property type="entry name" value="enolase"/>
    <property type="match status" value="1"/>
</dbReference>
<dbReference type="FunFam" id="3.30.390.10:FF:000001">
    <property type="entry name" value="Enolase"/>
    <property type="match status" value="1"/>
</dbReference>
<dbReference type="Gene3D" id="3.20.20.120">
    <property type="entry name" value="Enolase-like C-terminal domain"/>
    <property type="match status" value="1"/>
</dbReference>
<dbReference type="Gene3D" id="3.30.390.10">
    <property type="entry name" value="Enolase-like, N-terminal domain"/>
    <property type="match status" value="1"/>
</dbReference>
<dbReference type="HAMAP" id="MF_00318">
    <property type="entry name" value="Enolase"/>
    <property type="match status" value="1"/>
</dbReference>
<dbReference type="InterPro" id="IPR000941">
    <property type="entry name" value="Enolase"/>
</dbReference>
<dbReference type="InterPro" id="IPR036849">
    <property type="entry name" value="Enolase-like_C_sf"/>
</dbReference>
<dbReference type="InterPro" id="IPR029017">
    <property type="entry name" value="Enolase-like_N"/>
</dbReference>
<dbReference type="InterPro" id="IPR020810">
    <property type="entry name" value="Enolase_C"/>
</dbReference>
<dbReference type="InterPro" id="IPR020809">
    <property type="entry name" value="Enolase_CS"/>
</dbReference>
<dbReference type="InterPro" id="IPR020811">
    <property type="entry name" value="Enolase_N"/>
</dbReference>
<dbReference type="NCBIfam" id="TIGR01060">
    <property type="entry name" value="eno"/>
    <property type="match status" value="1"/>
</dbReference>
<dbReference type="PANTHER" id="PTHR11902">
    <property type="entry name" value="ENOLASE"/>
    <property type="match status" value="1"/>
</dbReference>
<dbReference type="PANTHER" id="PTHR11902:SF1">
    <property type="entry name" value="ENOLASE"/>
    <property type="match status" value="1"/>
</dbReference>
<dbReference type="Pfam" id="PF00113">
    <property type="entry name" value="Enolase_C"/>
    <property type="match status" value="1"/>
</dbReference>
<dbReference type="Pfam" id="PF03952">
    <property type="entry name" value="Enolase_N"/>
    <property type="match status" value="1"/>
</dbReference>
<dbReference type="PIRSF" id="PIRSF001400">
    <property type="entry name" value="Enolase"/>
    <property type="match status" value="1"/>
</dbReference>
<dbReference type="PRINTS" id="PR00148">
    <property type="entry name" value="ENOLASE"/>
</dbReference>
<dbReference type="SFLD" id="SFLDF00002">
    <property type="entry name" value="enolase"/>
    <property type="match status" value="1"/>
</dbReference>
<dbReference type="SFLD" id="SFLDG00178">
    <property type="entry name" value="enolase"/>
    <property type="match status" value="1"/>
</dbReference>
<dbReference type="SMART" id="SM01192">
    <property type="entry name" value="Enolase_C"/>
    <property type="match status" value="1"/>
</dbReference>
<dbReference type="SMART" id="SM01193">
    <property type="entry name" value="Enolase_N"/>
    <property type="match status" value="1"/>
</dbReference>
<dbReference type="SUPFAM" id="SSF51604">
    <property type="entry name" value="Enolase C-terminal domain-like"/>
    <property type="match status" value="1"/>
</dbReference>
<dbReference type="SUPFAM" id="SSF54826">
    <property type="entry name" value="Enolase N-terminal domain-like"/>
    <property type="match status" value="1"/>
</dbReference>
<dbReference type="PROSITE" id="PS00164">
    <property type="entry name" value="ENOLASE"/>
    <property type="match status" value="1"/>
</dbReference>
<reference key="1">
    <citation type="submission" date="2006-11" db="EMBL/GenBank/DDBJ databases">
        <title>Identification and characterization of a new conjugation/ type IVA secretion system (trb/tra) of L. pneumophila Corby localized on a mobile genomic island.</title>
        <authorList>
            <person name="Gloeckner G."/>
            <person name="Albert-Weissenberger C."/>
            <person name="Weinmann E."/>
            <person name="Jacobi S."/>
            <person name="Schunder E."/>
            <person name="Steinert M."/>
            <person name="Buchrieser C."/>
            <person name="Hacker J."/>
            <person name="Heuner K."/>
        </authorList>
    </citation>
    <scope>NUCLEOTIDE SEQUENCE [LARGE SCALE GENOMIC DNA]</scope>
    <source>
        <strain>Corby</strain>
    </source>
</reference>
<feature type="chain" id="PRO_1000019217" description="Enolase">
    <location>
        <begin position="1"/>
        <end position="422"/>
    </location>
</feature>
<feature type="active site" description="Proton donor" evidence="1">
    <location>
        <position position="204"/>
    </location>
</feature>
<feature type="active site" description="Proton acceptor" evidence="1">
    <location>
        <position position="336"/>
    </location>
</feature>
<feature type="binding site" evidence="1">
    <location>
        <position position="162"/>
    </location>
    <ligand>
        <name>(2R)-2-phosphoglycerate</name>
        <dbReference type="ChEBI" id="CHEBI:58289"/>
    </ligand>
</feature>
<feature type="binding site" evidence="1">
    <location>
        <position position="241"/>
    </location>
    <ligand>
        <name>Mg(2+)</name>
        <dbReference type="ChEBI" id="CHEBI:18420"/>
    </ligand>
</feature>
<feature type="binding site" evidence="1">
    <location>
        <position position="284"/>
    </location>
    <ligand>
        <name>Mg(2+)</name>
        <dbReference type="ChEBI" id="CHEBI:18420"/>
    </ligand>
</feature>
<feature type="binding site" evidence="1">
    <location>
        <position position="311"/>
    </location>
    <ligand>
        <name>Mg(2+)</name>
        <dbReference type="ChEBI" id="CHEBI:18420"/>
    </ligand>
</feature>
<feature type="binding site" evidence="1">
    <location>
        <position position="336"/>
    </location>
    <ligand>
        <name>(2R)-2-phosphoglycerate</name>
        <dbReference type="ChEBI" id="CHEBI:58289"/>
    </ligand>
</feature>
<feature type="binding site" evidence="1">
    <location>
        <position position="365"/>
    </location>
    <ligand>
        <name>(2R)-2-phosphoglycerate</name>
        <dbReference type="ChEBI" id="CHEBI:58289"/>
    </ligand>
</feature>
<feature type="binding site" evidence="1">
    <location>
        <position position="366"/>
    </location>
    <ligand>
        <name>(2R)-2-phosphoglycerate</name>
        <dbReference type="ChEBI" id="CHEBI:58289"/>
    </ligand>
</feature>
<feature type="binding site" evidence="1">
    <location>
        <position position="387"/>
    </location>
    <ligand>
        <name>(2R)-2-phosphoglycerate</name>
        <dbReference type="ChEBI" id="CHEBI:58289"/>
    </ligand>
</feature>
<proteinExistence type="inferred from homology"/>
<comment type="function">
    <text evidence="1">Catalyzes the reversible conversion of 2-phosphoglycerate (2-PG) into phosphoenolpyruvate (PEP). It is essential for the degradation of carbohydrates via glycolysis.</text>
</comment>
<comment type="catalytic activity">
    <reaction evidence="1">
        <text>(2R)-2-phosphoglycerate = phosphoenolpyruvate + H2O</text>
        <dbReference type="Rhea" id="RHEA:10164"/>
        <dbReference type="ChEBI" id="CHEBI:15377"/>
        <dbReference type="ChEBI" id="CHEBI:58289"/>
        <dbReference type="ChEBI" id="CHEBI:58702"/>
        <dbReference type="EC" id="4.2.1.11"/>
    </reaction>
</comment>
<comment type="cofactor">
    <cofactor evidence="1">
        <name>Mg(2+)</name>
        <dbReference type="ChEBI" id="CHEBI:18420"/>
    </cofactor>
    <text evidence="1">Binds a second Mg(2+) ion via substrate during catalysis.</text>
</comment>
<comment type="pathway">
    <text evidence="1">Carbohydrate degradation; glycolysis; pyruvate from D-glyceraldehyde 3-phosphate: step 4/5.</text>
</comment>
<comment type="subunit">
    <text evidence="1">Component of the RNA degradosome, a multiprotein complex involved in RNA processing and mRNA degradation.</text>
</comment>
<comment type="subcellular location">
    <subcellularLocation>
        <location evidence="1">Cytoplasm</location>
    </subcellularLocation>
    <subcellularLocation>
        <location evidence="1">Secreted</location>
    </subcellularLocation>
    <subcellularLocation>
        <location evidence="1">Cell surface</location>
    </subcellularLocation>
    <text evidence="1">Fractions of enolase are present in both the cytoplasm and on the cell surface.</text>
</comment>
<comment type="similarity">
    <text evidence="1">Belongs to the enolase family.</text>
</comment>
<organism>
    <name type="scientific">Legionella pneumophila (strain Corby)</name>
    <dbReference type="NCBI Taxonomy" id="400673"/>
    <lineage>
        <taxon>Bacteria</taxon>
        <taxon>Pseudomonadati</taxon>
        <taxon>Pseudomonadota</taxon>
        <taxon>Gammaproteobacteria</taxon>
        <taxon>Legionellales</taxon>
        <taxon>Legionellaceae</taxon>
        <taxon>Legionella</taxon>
    </lineage>
</organism>
<keyword id="KW-0963">Cytoplasm</keyword>
<keyword id="KW-0324">Glycolysis</keyword>
<keyword id="KW-0456">Lyase</keyword>
<keyword id="KW-0460">Magnesium</keyword>
<keyword id="KW-0479">Metal-binding</keyword>
<keyword id="KW-0964">Secreted</keyword>
<sequence length="422" mass="46216">MHIHKIQAREILDSRGNPTIEADVILTTGIIGRASVPSGASTGSREACELRDNDPKRYAGKGVQKAVKHVNNEINQALQGLSVEDQENLDRILCQLDNTENKSHLGANAILATSLACARARALSLNQPLYMTLNQGDMMTMPVPMMNILNGGAHADNNVDIQEFMIMPIGAPDFPVALQMGTEIFHVLKSVLKKQGLNTAVGDEGGFAPNIQSNRQALDLLSEAIEKAGFRLGEDIVFALDVAASELFNEGFYHMYSENQKFDSHQLIEYYANLISSYPIVSIEDGLDEKDWSGWKQLTTHLGNKVQLVGDDLFVTNPKILREGIAQGVANAILIKVNQIGTLSETRQAIKLAYDNGYRCVMSHRSGETEDTFIADLAVASGCGQIKTGSLCRTDRTAKYNQLLRINELASLPYAGKNILKR</sequence>
<gene>
    <name evidence="1" type="primary">eno</name>
    <name type="ordered locus">LPC_1523</name>
</gene>
<evidence type="ECO:0000255" key="1">
    <source>
        <dbReference type="HAMAP-Rule" id="MF_00318"/>
    </source>
</evidence>